<name>PLSB_XYLFA</name>
<accession>Q9PEJ7</accession>
<organism>
    <name type="scientific">Xylella fastidiosa (strain 9a5c)</name>
    <dbReference type="NCBI Taxonomy" id="160492"/>
    <lineage>
        <taxon>Bacteria</taxon>
        <taxon>Pseudomonadati</taxon>
        <taxon>Pseudomonadota</taxon>
        <taxon>Gammaproteobacteria</taxon>
        <taxon>Lysobacterales</taxon>
        <taxon>Lysobacteraceae</taxon>
        <taxon>Xylella</taxon>
    </lineage>
</organism>
<sequence>MPKKNSPLLPKETTPTQSSVDTSGSSNLTWPVSEHTIRRPLWARLLGQILDPWLDLSIEPEHCVQYPEHCVQYNDGRPIIYVLEDYGLCNTLILDKACRKTKLPSPLIPLPGNPLQRKRAYLALSRRSSSNSLIPNQRGGKTHSDSLANLLQAHRIRDTLDVHLVPVSIFIGRTPDRQSGWFAVLFSENWALVGRFRRLLAVLLNGRNTIVCFAPPISVRQTLNEGLPPERTLRKLQRVLRAHFRRIRETVIGPDLSTRRLLVDNVLATEAVREAIASQAKRDGTDLSETWRKAQAYAWEIAADYSSPVIRSADFLFSHVWNRIYAGVLIHHVDSFKETAPGHEVVYVPSHRSHIDYLLLSYCLYQCGIVLPHIVAGINLNLPIVGTLLRKCGAFFIRRSIKGNMLYSIVLSEYVAQLVAGGYSLEYFIEGGRSRTGRLLQPKGGMIMMTLQAFLRQPRRPVLFQPIYIGYEKLIEGTSYLDELSGEPKKKESIWRLFWNIPKVLKQKYGQVVVNFGEPIALNDVLAELAPEWEGQALNENEKPAWLSNTVNHLARQIQTRINSAADVNPINLLALALLSTPKHAMGEADLIAQITLCKKILLELPYSNRVTVTPHTPERIIAHAEQINILTRVHHPLGDVLRVDGDNAVLLSYFRNNVLHLFTASAWVACCFKNNRRISRIALIRLGVGMYPFLQAELFLPWTEDQFAQHIQQVIELFVREGLLLSAGDEEEDPLTRNTSQTDEVFRLRAISHSLQQAFERYYITISILVKNGPGTLSASELESLCQLAAQRLSLLYASTAPEFFDKGLFRGFIQKLRELNLVWPDTYSKLLFDERLDTSAKDAQVILGRELRHTIERISPEATKPAPK</sequence>
<gene>
    <name type="primary">plsB</name>
    <name type="ordered locus">XF_1031</name>
</gene>
<evidence type="ECO:0000250" key="1"/>
<evidence type="ECO:0000256" key="2">
    <source>
        <dbReference type="SAM" id="MobiDB-lite"/>
    </source>
</evidence>
<evidence type="ECO:0000305" key="3"/>
<comment type="catalytic activity">
    <reaction>
        <text>sn-glycerol 3-phosphate + an acyl-CoA = a 1-acyl-sn-glycero-3-phosphate + CoA</text>
        <dbReference type="Rhea" id="RHEA:15325"/>
        <dbReference type="ChEBI" id="CHEBI:57287"/>
        <dbReference type="ChEBI" id="CHEBI:57597"/>
        <dbReference type="ChEBI" id="CHEBI:57970"/>
        <dbReference type="ChEBI" id="CHEBI:58342"/>
        <dbReference type="EC" id="2.3.1.15"/>
    </reaction>
</comment>
<comment type="pathway">
    <text>Phospholipid metabolism; CDP-diacylglycerol biosynthesis; CDP-diacylglycerol from sn-glycerol 3-phosphate: step 1/3.</text>
</comment>
<comment type="subcellular location">
    <subcellularLocation>
        <location evidence="1">Cell inner membrane</location>
        <topology evidence="1">Peripheral membrane protein</topology>
        <orientation evidence="1">Cytoplasmic side</orientation>
    </subcellularLocation>
</comment>
<comment type="domain">
    <text evidence="1">The HXXXXD motif is essential for acyltransferase activity and may constitute the binding site for the phosphate moiety of the glycerol-3-phosphate.</text>
</comment>
<comment type="similarity">
    <text evidence="3">Belongs to the GPAT/DAPAT family.</text>
</comment>
<keyword id="KW-0012">Acyltransferase</keyword>
<keyword id="KW-0997">Cell inner membrane</keyword>
<keyword id="KW-1003">Cell membrane</keyword>
<keyword id="KW-0444">Lipid biosynthesis</keyword>
<keyword id="KW-0443">Lipid metabolism</keyword>
<keyword id="KW-0472">Membrane</keyword>
<keyword id="KW-0594">Phospholipid biosynthesis</keyword>
<keyword id="KW-1208">Phospholipid metabolism</keyword>
<keyword id="KW-0808">Transferase</keyword>
<feature type="chain" id="PRO_0000195241" description="Glycerol-3-phosphate acyltransferase">
    <location>
        <begin position="1"/>
        <end position="870"/>
    </location>
</feature>
<feature type="region of interest" description="Disordered" evidence="2">
    <location>
        <begin position="1"/>
        <end position="27"/>
    </location>
</feature>
<feature type="short sequence motif" description="HXXXXD motif">
    <location>
        <begin position="351"/>
        <end position="356"/>
    </location>
</feature>
<feature type="compositionally biased region" description="Polar residues" evidence="2">
    <location>
        <begin position="13"/>
        <end position="27"/>
    </location>
</feature>
<protein>
    <recommendedName>
        <fullName>Glycerol-3-phosphate acyltransferase</fullName>
        <shortName>GPAT</shortName>
        <ecNumber>2.3.1.15</ecNumber>
    </recommendedName>
</protein>
<dbReference type="EC" id="2.3.1.15"/>
<dbReference type="EMBL" id="AE003849">
    <property type="protein sequence ID" value="AAF83841.1"/>
    <property type="molecule type" value="Genomic_DNA"/>
</dbReference>
<dbReference type="PIR" id="B82732">
    <property type="entry name" value="B82732"/>
</dbReference>
<dbReference type="SMR" id="Q9PEJ7"/>
<dbReference type="STRING" id="160492.XF_1031"/>
<dbReference type="KEGG" id="xfa:XF_1031"/>
<dbReference type="PATRIC" id="fig|160492.11.peg.1100"/>
<dbReference type="eggNOG" id="COG2937">
    <property type="taxonomic scope" value="Bacteria"/>
</dbReference>
<dbReference type="HOGENOM" id="CLU_015407_0_0_6"/>
<dbReference type="UniPathway" id="UPA00557">
    <property type="reaction ID" value="UER00612"/>
</dbReference>
<dbReference type="Proteomes" id="UP000000812">
    <property type="component" value="Chromosome"/>
</dbReference>
<dbReference type="GO" id="GO:0005886">
    <property type="term" value="C:plasma membrane"/>
    <property type="evidence" value="ECO:0007669"/>
    <property type="project" value="UniProtKB-SubCell"/>
</dbReference>
<dbReference type="GO" id="GO:0004366">
    <property type="term" value="F:glycerol-3-phosphate O-acyltransferase activity"/>
    <property type="evidence" value="ECO:0007669"/>
    <property type="project" value="UniProtKB-UniRule"/>
</dbReference>
<dbReference type="GO" id="GO:0016024">
    <property type="term" value="P:CDP-diacylglycerol biosynthetic process"/>
    <property type="evidence" value="ECO:0007669"/>
    <property type="project" value="UniProtKB-UniRule"/>
</dbReference>
<dbReference type="GO" id="GO:0006631">
    <property type="term" value="P:fatty acid metabolic process"/>
    <property type="evidence" value="ECO:0007669"/>
    <property type="project" value="TreeGrafter"/>
</dbReference>
<dbReference type="CDD" id="cd07993">
    <property type="entry name" value="LPLAT_DHAPAT-like"/>
    <property type="match status" value="1"/>
</dbReference>
<dbReference type="HAMAP" id="MF_00393">
    <property type="entry name" value="Glyc3P_acyltrans"/>
    <property type="match status" value="1"/>
</dbReference>
<dbReference type="InterPro" id="IPR022284">
    <property type="entry name" value="GPAT/DHAPAT"/>
</dbReference>
<dbReference type="InterPro" id="IPR045520">
    <property type="entry name" value="GPAT/DHAPAT_C"/>
</dbReference>
<dbReference type="InterPro" id="IPR041728">
    <property type="entry name" value="GPAT/DHAPAT_LPLAT"/>
</dbReference>
<dbReference type="InterPro" id="IPR028354">
    <property type="entry name" value="GPAT_PlsB"/>
</dbReference>
<dbReference type="InterPro" id="IPR002123">
    <property type="entry name" value="Plipid/glycerol_acylTrfase"/>
</dbReference>
<dbReference type="NCBIfam" id="TIGR03703">
    <property type="entry name" value="plsB"/>
    <property type="match status" value="1"/>
</dbReference>
<dbReference type="NCBIfam" id="NF003441">
    <property type="entry name" value="PRK04974.1"/>
    <property type="match status" value="1"/>
</dbReference>
<dbReference type="PANTHER" id="PTHR12563:SF17">
    <property type="entry name" value="DIHYDROXYACETONE PHOSPHATE ACYLTRANSFERASE"/>
    <property type="match status" value="1"/>
</dbReference>
<dbReference type="PANTHER" id="PTHR12563">
    <property type="entry name" value="GLYCEROL-3-PHOSPHATE ACYLTRANSFERASE"/>
    <property type="match status" value="1"/>
</dbReference>
<dbReference type="Pfam" id="PF01553">
    <property type="entry name" value="Acyltransferase"/>
    <property type="match status" value="1"/>
</dbReference>
<dbReference type="Pfam" id="PF19277">
    <property type="entry name" value="GPAT_C"/>
    <property type="match status" value="1"/>
</dbReference>
<dbReference type="PIRSF" id="PIRSF500064">
    <property type="entry name" value="GPAT"/>
    <property type="match status" value="1"/>
</dbReference>
<dbReference type="PIRSF" id="PIRSF000437">
    <property type="entry name" value="GPAT_DHAPAT"/>
    <property type="match status" value="1"/>
</dbReference>
<dbReference type="SMART" id="SM00563">
    <property type="entry name" value="PlsC"/>
    <property type="match status" value="1"/>
</dbReference>
<dbReference type="SUPFAM" id="SSF69593">
    <property type="entry name" value="Glycerol-3-phosphate (1)-acyltransferase"/>
    <property type="match status" value="1"/>
</dbReference>
<proteinExistence type="inferred from homology"/>
<reference key="1">
    <citation type="journal article" date="2000" name="Nature">
        <title>The genome sequence of the plant pathogen Xylella fastidiosa.</title>
        <authorList>
            <person name="Simpson A.J.G."/>
            <person name="Reinach F.C."/>
            <person name="Arruda P."/>
            <person name="Abreu F.A."/>
            <person name="Acencio M."/>
            <person name="Alvarenga R."/>
            <person name="Alves L.M.C."/>
            <person name="Araya J.E."/>
            <person name="Baia G.S."/>
            <person name="Baptista C.S."/>
            <person name="Barros M.H."/>
            <person name="Bonaccorsi E.D."/>
            <person name="Bordin S."/>
            <person name="Bove J.M."/>
            <person name="Briones M.R.S."/>
            <person name="Bueno M.R.P."/>
            <person name="Camargo A.A."/>
            <person name="Camargo L.E.A."/>
            <person name="Carraro D.M."/>
            <person name="Carrer H."/>
            <person name="Colauto N.B."/>
            <person name="Colombo C."/>
            <person name="Costa F.F."/>
            <person name="Costa M.C.R."/>
            <person name="Costa-Neto C.M."/>
            <person name="Coutinho L.L."/>
            <person name="Cristofani M."/>
            <person name="Dias-Neto E."/>
            <person name="Docena C."/>
            <person name="El-Dorry H."/>
            <person name="Facincani A.P."/>
            <person name="Ferreira A.J.S."/>
            <person name="Ferreira V.C.A."/>
            <person name="Ferro J.A."/>
            <person name="Fraga J.S."/>
            <person name="Franca S.C."/>
            <person name="Franco M.C."/>
            <person name="Frohme M."/>
            <person name="Furlan L.R."/>
            <person name="Garnier M."/>
            <person name="Goldman G.H."/>
            <person name="Goldman M.H.S."/>
            <person name="Gomes S.L."/>
            <person name="Gruber A."/>
            <person name="Ho P.L."/>
            <person name="Hoheisel J.D."/>
            <person name="Junqueira M.L."/>
            <person name="Kemper E.L."/>
            <person name="Kitajima J.P."/>
            <person name="Krieger J.E."/>
            <person name="Kuramae E.E."/>
            <person name="Laigret F."/>
            <person name="Lambais M.R."/>
            <person name="Leite L.C.C."/>
            <person name="Lemos E.G.M."/>
            <person name="Lemos M.V.F."/>
            <person name="Lopes S.A."/>
            <person name="Lopes C.R."/>
            <person name="Machado J.A."/>
            <person name="Machado M.A."/>
            <person name="Madeira A.M.B.N."/>
            <person name="Madeira H.M.F."/>
            <person name="Marino C.L."/>
            <person name="Marques M.V."/>
            <person name="Martins E.A.L."/>
            <person name="Martins E.M.F."/>
            <person name="Matsukuma A.Y."/>
            <person name="Menck C.F.M."/>
            <person name="Miracca E.C."/>
            <person name="Miyaki C.Y."/>
            <person name="Monteiro-Vitorello C.B."/>
            <person name="Moon D.H."/>
            <person name="Nagai M.A."/>
            <person name="Nascimento A.L.T.O."/>
            <person name="Netto L.E.S."/>
            <person name="Nhani A. Jr."/>
            <person name="Nobrega F.G."/>
            <person name="Nunes L.R."/>
            <person name="Oliveira M.A."/>
            <person name="de Oliveira M.C."/>
            <person name="de Oliveira R.C."/>
            <person name="Palmieri D.A."/>
            <person name="Paris A."/>
            <person name="Peixoto B.R."/>
            <person name="Pereira G.A.G."/>
            <person name="Pereira H.A. Jr."/>
            <person name="Pesquero J.B."/>
            <person name="Quaggio R.B."/>
            <person name="Roberto P.G."/>
            <person name="Rodrigues V."/>
            <person name="de Rosa A.J.M."/>
            <person name="de Rosa V.E. Jr."/>
            <person name="de Sa R.G."/>
            <person name="Santelli R.V."/>
            <person name="Sawasaki H.E."/>
            <person name="da Silva A.C.R."/>
            <person name="da Silva A.M."/>
            <person name="da Silva F.R."/>
            <person name="Silva W.A. Jr."/>
            <person name="da Silveira J.F."/>
            <person name="Silvestri M.L.Z."/>
            <person name="Siqueira W.J."/>
            <person name="de Souza A.A."/>
            <person name="de Souza A.P."/>
            <person name="Terenzi M.F."/>
            <person name="Truffi D."/>
            <person name="Tsai S.M."/>
            <person name="Tsuhako M.H."/>
            <person name="Vallada H."/>
            <person name="Van Sluys M.A."/>
            <person name="Verjovski-Almeida S."/>
            <person name="Vettore A.L."/>
            <person name="Zago M.A."/>
            <person name="Zatz M."/>
            <person name="Meidanis J."/>
            <person name="Setubal J.C."/>
        </authorList>
    </citation>
    <scope>NUCLEOTIDE SEQUENCE [LARGE SCALE GENOMIC DNA]</scope>
    <source>
        <strain>9a5c</strain>
    </source>
</reference>